<sequence>MLRIADKTFDSHLFTGTGKFASSQLMVEAIRASGSQLVTLAMKRVDLRQHNDAILAPLIEAGVTLLPNTSGAKTAEEAIFAAQLAREALGTNWLKLEIHPDARWLLPDPIETLKAAEALVKQGFVVLPYCGADPVLCKRLEEVGCSAVMPLGAPIGSNQGLETKAMLEIIIQQSTVPVVVDAGIGVPSHAAQALEMGADAVLVNTAIAVADDPVMMATAFRLAVEAGVLARQAVPGSKSSQASATSPLTGFLEALA</sequence>
<accession>A9N0K2</accession>
<feature type="chain" id="PRO_1000080876" description="Thiazole synthase">
    <location>
        <begin position="1"/>
        <end position="256"/>
    </location>
</feature>
<feature type="active site" description="Schiff-base intermediate with DXP" evidence="1">
    <location>
        <position position="95"/>
    </location>
</feature>
<feature type="binding site" evidence="1">
    <location>
        <position position="156"/>
    </location>
    <ligand>
        <name>1-deoxy-D-xylulose 5-phosphate</name>
        <dbReference type="ChEBI" id="CHEBI:57792"/>
    </ligand>
</feature>
<feature type="binding site" evidence="1">
    <location>
        <begin position="182"/>
        <end position="183"/>
    </location>
    <ligand>
        <name>1-deoxy-D-xylulose 5-phosphate</name>
        <dbReference type="ChEBI" id="CHEBI:57792"/>
    </ligand>
</feature>
<feature type="binding site" evidence="1">
    <location>
        <begin position="204"/>
        <end position="205"/>
    </location>
    <ligand>
        <name>1-deoxy-D-xylulose 5-phosphate</name>
        <dbReference type="ChEBI" id="CHEBI:57792"/>
    </ligand>
</feature>
<keyword id="KW-0963">Cytoplasm</keyword>
<keyword id="KW-0704">Schiff base</keyword>
<keyword id="KW-0784">Thiamine biosynthesis</keyword>
<keyword id="KW-0808">Transferase</keyword>
<organism>
    <name type="scientific">Salmonella paratyphi B (strain ATCC BAA-1250 / SPB7)</name>
    <dbReference type="NCBI Taxonomy" id="1016998"/>
    <lineage>
        <taxon>Bacteria</taxon>
        <taxon>Pseudomonadati</taxon>
        <taxon>Pseudomonadota</taxon>
        <taxon>Gammaproteobacteria</taxon>
        <taxon>Enterobacterales</taxon>
        <taxon>Enterobacteriaceae</taxon>
        <taxon>Salmonella</taxon>
    </lineage>
</organism>
<comment type="function">
    <text evidence="1">Catalyzes the rearrangement of 1-deoxy-D-xylulose 5-phosphate (DXP) to produce the thiazole phosphate moiety of thiamine. Sulfur is provided by the thiocarboxylate moiety of the carrier protein ThiS. In vitro, sulfur can be provided by H(2)S.</text>
</comment>
<comment type="catalytic activity">
    <reaction evidence="1">
        <text>[ThiS sulfur-carrier protein]-C-terminal-Gly-aminoethanethioate + 2-iminoacetate + 1-deoxy-D-xylulose 5-phosphate = [ThiS sulfur-carrier protein]-C-terminal Gly-Gly + 2-[(2R,5Z)-2-carboxy-4-methylthiazol-5(2H)-ylidene]ethyl phosphate + 2 H2O + H(+)</text>
        <dbReference type="Rhea" id="RHEA:26297"/>
        <dbReference type="Rhea" id="RHEA-COMP:12909"/>
        <dbReference type="Rhea" id="RHEA-COMP:19908"/>
        <dbReference type="ChEBI" id="CHEBI:15377"/>
        <dbReference type="ChEBI" id="CHEBI:15378"/>
        <dbReference type="ChEBI" id="CHEBI:57792"/>
        <dbReference type="ChEBI" id="CHEBI:62899"/>
        <dbReference type="ChEBI" id="CHEBI:77846"/>
        <dbReference type="ChEBI" id="CHEBI:90778"/>
        <dbReference type="ChEBI" id="CHEBI:232372"/>
        <dbReference type="EC" id="2.8.1.10"/>
    </reaction>
</comment>
<comment type="pathway">
    <text evidence="1">Cofactor biosynthesis; thiamine diphosphate biosynthesis.</text>
</comment>
<comment type="subunit">
    <text evidence="1">Homotetramer. Forms heterodimers with either ThiH or ThiS.</text>
</comment>
<comment type="subcellular location">
    <subcellularLocation>
        <location evidence="1">Cytoplasm</location>
    </subcellularLocation>
</comment>
<comment type="similarity">
    <text evidence="1">Belongs to the ThiG family.</text>
</comment>
<gene>
    <name evidence="1" type="primary">thiG</name>
    <name type="ordered locus">SPAB_05150</name>
</gene>
<proteinExistence type="inferred from homology"/>
<dbReference type="EC" id="2.8.1.10" evidence="1"/>
<dbReference type="EMBL" id="CP000886">
    <property type="protein sequence ID" value="ABX70431.1"/>
    <property type="molecule type" value="Genomic_DNA"/>
</dbReference>
<dbReference type="RefSeq" id="WP_000944084.1">
    <property type="nucleotide sequence ID" value="NC_010102.1"/>
</dbReference>
<dbReference type="SMR" id="A9N0K2"/>
<dbReference type="KEGG" id="spq:SPAB_05150"/>
<dbReference type="PATRIC" id="fig|1016998.12.peg.4824"/>
<dbReference type="HOGENOM" id="CLU_062233_1_0_6"/>
<dbReference type="BioCyc" id="SENT1016998:SPAB_RS20955-MONOMER"/>
<dbReference type="UniPathway" id="UPA00060"/>
<dbReference type="Proteomes" id="UP000008556">
    <property type="component" value="Chromosome"/>
</dbReference>
<dbReference type="GO" id="GO:0005737">
    <property type="term" value="C:cytoplasm"/>
    <property type="evidence" value="ECO:0007669"/>
    <property type="project" value="UniProtKB-SubCell"/>
</dbReference>
<dbReference type="GO" id="GO:1990107">
    <property type="term" value="F:thiazole synthase activity"/>
    <property type="evidence" value="ECO:0007669"/>
    <property type="project" value="UniProtKB-EC"/>
</dbReference>
<dbReference type="GO" id="GO:0009229">
    <property type="term" value="P:thiamine diphosphate biosynthetic process"/>
    <property type="evidence" value="ECO:0007669"/>
    <property type="project" value="UniProtKB-UniRule"/>
</dbReference>
<dbReference type="CDD" id="cd04728">
    <property type="entry name" value="ThiG"/>
    <property type="match status" value="1"/>
</dbReference>
<dbReference type="FunFam" id="3.20.20.70:FF:000049">
    <property type="entry name" value="Thiazole synthase"/>
    <property type="match status" value="1"/>
</dbReference>
<dbReference type="Gene3D" id="3.20.20.70">
    <property type="entry name" value="Aldolase class I"/>
    <property type="match status" value="1"/>
</dbReference>
<dbReference type="HAMAP" id="MF_00443">
    <property type="entry name" value="ThiG"/>
    <property type="match status" value="1"/>
</dbReference>
<dbReference type="InterPro" id="IPR013785">
    <property type="entry name" value="Aldolase_TIM"/>
</dbReference>
<dbReference type="InterPro" id="IPR033983">
    <property type="entry name" value="Thiazole_synthase_ThiG"/>
</dbReference>
<dbReference type="InterPro" id="IPR008867">
    <property type="entry name" value="ThiG"/>
</dbReference>
<dbReference type="PANTHER" id="PTHR34266">
    <property type="entry name" value="THIAZOLE SYNTHASE"/>
    <property type="match status" value="1"/>
</dbReference>
<dbReference type="PANTHER" id="PTHR34266:SF2">
    <property type="entry name" value="THIAZOLE SYNTHASE"/>
    <property type="match status" value="1"/>
</dbReference>
<dbReference type="Pfam" id="PF05690">
    <property type="entry name" value="ThiG"/>
    <property type="match status" value="1"/>
</dbReference>
<dbReference type="SUPFAM" id="SSF110399">
    <property type="entry name" value="ThiG-like"/>
    <property type="match status" value="1"/>
</dbReference>
<protein>
    <recommendedName>
        <fullName evidence="1">Thiazole synthase</fullName>
        <ecNumber evidence="1">2.8.1.10</ecNumber>
    </recommendedName>
</protein>
<name>THIG_SALPB</name>
<reference key="1">
    <citation type="submission" date="2007-11" db="EMBL/GenBank/DDBJ databases">
        <authorList>
            <consortium name="The Salmonella enterica serovar Paratyphi B Genome Sequencing Project"/>
            <person name="McClelland M."/>
            <person name="Sanderson E.K."/>
            <person name="Porwollik S."/>
            <person name="Spieth J."/>
            <person name="Clifton W.S."/>
            <person name="Fulton R."/>
            <person name="Cordes M."/>
            <person name="Wollam A."/>
            <person name="Shah N."/>
            <person name="Pepin K."/>
            <person name="Bhonagiri V."/>
            <person name="Nash W."/>
            <person name="Johnson M."/>
            <person name="Thiruvilangam P."/>
            <person name="Wilson R."/>
        </authorList>
    </citation>
    <scope>NUCLEOTIDE SEQUENCE [LARGE SCALE GENOMIC DNA]</scope>
    <source>
        <strain>ATCC BAA-1250 / SPB7</strain>
    </source>
</reference>
<evidence type="ECO:0000255" key="1">
    <source>
        <dbReference type="HAMAP-Rule" id="MF_00443"/>
    </source>
</evidence>